<accession>Q1CUB6</accession>
<evidence type="ECO:0000255" key="1">
    <source>
        <dbReference type="HAMAP-Rule" id="MF_00156"/>
    </source>
</evidence>
<reference key="1">
    <citation type="journal article" date="2006" name="Proc. Natl. Acad. Sci. U.S.A.">
        <title>The complete genome sequence of a chronic atrophic gastritis Helicobacter pylori strain: evolution during disease progression.</title>
        <authorList>
            <person name="Oh J.D."/>
            <person name="Kling-Baeckhed H."/>
            <person name="Giannakis M."/>
            <person name="Xu J."/>
            <person name="Fulton R.S."/>
            <person name="Fulton L.A."/>
            <person name="Cordum H.S."/>
            <person name="Wang C."/>
            <person name="Elliott G."/>
            <person name="Edwards J."/>
            <person name="Mardis E.R."/>
            <person name="Engstrand L.G."/>
            <person name="Gordon J.I."/>
        </authorList>
    </citation>
    <scope>NUCLEOTIDE SEQUENCE [LARGE SCALE GENOMIC DNA]</scope>
    <source>
        <strain>HPAG1</strain>
    </source>
</reference>
<protein>
    <recommendedName>
        <fullName evidence="1">3-methyl-2-oxobutanoate hydroxymethyltransferase</fullName>
        <ecNumber evidence="1">2.1.2.11</ecNumber>
    </recommendedName>
    <alternativeName>
        <fullName evidence="1">Ketopantoate hydroxymethyltransferase</fullName>
        <shortName evidence="1">KPHMT</shortName>
    </alternativeName>
</protein>
<dbReference type="EC" id="2.1.2.11" evidence="1"/>
<dbReference type="EMBL" id="CP000241">
    <property type="protein sequence ID" value="ABF84456.1"/>
    <property type="molecule type" value="Genomic_DNA"/>
</dbReference>
<dbReference type="RefSeq" id="WP_000062691.1">
    <property type="nucleotide sequence ID" value="NC_008086.1"/>
</dbReference>
<dbReference type="SMR" id="Q1CUB6"/>
<dbReference type="KEGG" id="hpa:HPAG1_0389"/>
<dbReference type="HOGENOM" id="CLU_036645_1_0_7"/>
<dbReference type="UniPathway" id="UPA00028">
    <property type="reaction ID" value="UER00003"/>
</dbReference>
<dbReference type="GO" id="GO:0005737">
    <property type="term" value="C:cytoplasm"/>
    <property type="evidence" value="ECO:0007669"/>
    <property type="project" value="UniProtKB-SubCell"/>
</dbReference>
<dbReference type="GO" id="GO:0003864">
    <property type="term" value="F:3-methyl-2-oxobutanoate hydroxymethyltransferase activity"/>
    <property type="evidence" value="ECO:0007669"/>
    <property type="project" value="UniProtKB-UniRule"/>
</dbReference>
<dbReference type="GO" id="GO:0000287">
    <property type="term" value="F:magnesium ion binding"/>
    <property type="evidence" value="ECO:0007669"/>
    <property type="project" value="TreeGrafter"/>
</dbReference>
<dbReference type="GO" id="GO:0015940">
    <property type="term" value="P:pantothenate biosynthetic process"/>
    <property type="evidence" value="ECO:0007669"/>
    <property type="project" value="UniProtKB-UniRule"/>
</dbReference>
<dbReference type="CDD" id="cd06557">
    <property type="entry name" value="KPHMT-like"/>
    <property type="match status" value="1"/>
</dbReference>
<dbReference type="FunFam" id="3.20.20.60:FF:000041">
    <property type="entry name" value="3-methyl-2-oxobutanoate hydroxymethyltransferase"/>
    <property type="match status" value="1"/>
</dbReference>
<dbReference type="Gene3D" id="3.20.20.60">
    <property type="entry name" value="Phosphoenolpyruvate-binding domains"/>
    <property type="match status" value="1"/>
</dbReference>
<dbReference type="HAMAP" id="MF_00156">
    <property type="entry name" value="PanB"/>
    <property type="match status" value="1"/>
</dbReference>
<dbReference type="InterPro" id="IPR003700">
    <property type="entry name" value="Pantoate_hydroxy_MeTrfase"/>
</dbReference>
<dbReference type="InterPro" id="IPR015813">
    <property type="entry name" value="Pyrv/PenolPyrv_kinase-like_dom"/>
</dbReference>
<dbReference type="InterPro" id="IPR040442">
    <property type="entry name" value="Pyrv_kinase-like_dom_sf"/>
</dbReference>
<dbReference type="NCBIfam" id="TIGR00222">
    <property type="entry name" value="panB"/>
    <property type="match status" value="1"/>
</dbReference>
<dbReference type="NCBIfam" id="NF001452">
    <property type="entry name" value="PRK00311.1"/>
    <property type="match status" value="1"/>
</dbReference>
<dbReference type="PANTHER" id="PTHR20881">
    <property type="entry name" value="3-METHYL-2-OXOBUTANOATE HYDROXYMETHYLTRANSFERASE"/>
    <property type="match status" value="1"/>
</dbReference>
<dbReference type="PANTHER" id="PTHR20881:SF0">
    <property type="entry name" value="3-METHYL-2-OXOBUTANOATE HYDROXYMETHYLTRANSFERASE"/>
    <property type="match status" value="1"/>
</dbReference>
<dbReference type="Pfam" id="PF02548">
    <property type="entry name" value="Pantoate_transf"/>
    <property type="match status" value="1"/>
</dbReference>
<dbReference type="PIRSF" id="PIRSF000388">
    <property type="entry name" value="Pantoate_hydroxy_MeTrfase"/>
    <property type="match status" value="1"/>
</dbReference>
<dbReference type="SUPFAM" id="SSF51621">
    <property type="entry name" value="Phosphoenolpyruvate/pyruvate domain"/>
    <property type="match status" value="1"/>
</dbReference>
<comment type="function">
    <text evidence="1">Catalyzes the reversible reaction in which hydroxymethyl group from 5,10-methylenetetrahydrofolate is transferred onto alpha-ketoisovalerate to form ketopantoate.</text>
</comment>
<comment type="catalytic activity">
    <reaction evidence="1">
        <text>3-methyl-2-oxobutanoate + (6R)-5,10-methylene-5,6,7,8-tetrahydrofolate + H2O = 2-dehydropantoate + (6S)-5,6,7,8-tetrahydrofolate</text>
        <dbReference type="Rhea" id="RHEA:11824"/>
        <dbReference type="ChEBI" id="CHEBI:11561"/>
        <dbReference type="ChEBI" id="CHEBI:11851"/>
        <dbReference type="ChEBI" id="CHEBI:15377"/>
        <dbReference type="ChEBI" id="CHEBI:15636"/>
        <dbReference type="ChEBI" id="CHEBI:57453"/>
        <dbReference type="EC" id="2.1.2.11"/>
    </reaction>
</comment>
<comment type="cofactor">
    <cofactor evidence="1">
        <name>Mg(2+)</name>
        <dbReference type="ChEBI" id="CHEBI:18420"/>
    </cofactor>
    <text evidence="1">Binds 1 Mg(2+) ion per subunit.</text>
</comment>
<comment type="pathway">
    <text evidence="1">Cofactor biosynthesis; (R)-pantothenate biosynthesis; (R)-pantoate from 3-methyl-2-oxobutanoate: step 1/2.</text>
</comment>
<comment type="subunit">
    <text evidence="1">Homodecamer; pentamer of dimers.</text>
</comment>
<comment type="subcellular location">
    <subcellularLocation>
        <location evidence="1">Cytoplasm</location>
    </subcellularLocation>
</comment>
<comment type="similarity">
    <text evidence="1">Belongs to the PanB family.</text>
</comment>
<proteinExistence type="inferred from homology"/>
<gene>
    <name evidence="1" type="primary">panB</name>
    <name type="ordered locus">HPAG1_0389</name>
</gene>
<keyword id="KW-0963">Cytoplasm</keyword>
<keyword id="KW-0460">Magnesium</keyword>
<keyword id="KW-0479">Metal-binding</keyword>
<keyword id="KW-0566">Pantothenate biosynthesis</keyword>
<keyword id="KW-0808">Transferase</keyword>
<name>PANB_HELPH</name>
<sequence>MSMQTAPIKKITLNHLQAKKNQEKIIAITAYDALFAQIFDPLVDVILVGDSLNMSFFNQNDTLSASVKMMLYHTKAVCAGAKTPFIITDMPFGSYKDEKTALKNAIRVYKETQASAIKLEGGKEKAKLVKTLTNEGVIVVGHIGLMPQFVRLDGGYKIKGKNEEQQKKLLEDALSLEEAGAGLLVLEGITTPIAQTITQKIKIPTIGIGSGKDCDGQILVWSDMLGFFDSFKPKFVREYLKGKELVQNAIKQYADDVKKGNFPNELESYH</sequence>
<feature type="chain" id="PRO_0000297283" description="3-methyl-2-oxobutanoate hydroxymethyltransferase">
    <location>
        <begin position="1"/>
        <end position="270"/>
    </location>
</feature>
<feature type="active site" description="Proton acceptor" evidence="1">
    <location>
        <position position="187"/>
    </location>
</feature>
<feature type="binding site" evidence="1">
    <location>
        <begin position="50"/>
        <end position="51"/>
    </location>
    <ligand>
        <name>3-methyl-2-oxobutanoate</name>
        <dbReference type="ChEBI" id="CHEBI:11851"/>
    </ligand>
</feature>
<feature type="binding site" evidence="1">
    <location>
        <position position="50"/>
    </location>
    <ligand>
        <name>Mg(2+)</name>
        <dbReference type="ChEBI" id="CHEBI:18420"/>
    </ligand>
</feature>
<feature type="binding site" evidence="1">
    <location>
        <position position="89"/>
    </location>
    <ligand>
        <name>3-methyl-2-oxobutanoate</name>
        <dbReference type="ChEBI" id="CHEBI:11851"/>
    </ligand>
</feature>
<feature type="binding site" evidence="1">
    <location>
        <position position="89"/>
    </location>
    <ligand>
        <name>Mg(2+)</name>
        <dbReference type="ChEBI" id="CHEBI:18420"/>
    </ligand>
</feature>
<feature type="binding site" evidence="1">
    <location>
        <position position="118"/>
    </location>
    <ligand>
        <name>3-methyl-2-oxobutanoate</name>
        <dbReference type="ChEBI" id="CHEBI:11851"/>
    </ligand>
</feature>
<feature type="binding site" evidence="1">
    <location>
        <position position="120"/>
    </location>
    <ligand>
        <name>Mg(2+)</name>
        <dbReference type="ChEBI" id="CHEBI:18420"/>
    </ligand>
</feature>
<organism>
    <name type="scientific">Helicobacter pylori (strain HPAG1)</name>
    <dbReference type="NCBI Taxonomy" id="357544"/>
    <lineage>
        <taxon>Bacteria</taxon>
        <taxon>Pseudomonadati</taxon>
        <taxon>Campylobacterota</taxon>
        <taxon>Epsilonproteobacteria</taxon>
        <taxon>Campylobacterales</taxon>
        <taxon>Helicobacteraceae</taxon>
        <taxon>Helicobacter</taxon>
    </lineage>
</organism>